<name>RL30_RHOP5</name>
<keyword id="KW-0687">Ribonucleoprotein</keyword>
<keyword id="KW-0689">Ribosomal protein</keyword>
<sequence length="64" mass="7131">MANAAKTITVEQTASAIRRHHSQRATLIGLKLNKIGRTAELQDTPEVRGMISKVQHLVRIVDEK</sequence>
<organism>
    <name type="scientific">Rhodopseudomonas palustris (strain BisA53)</name>
    <dbReference type="NCBI Taxonomy" id="316055"/>
    <lineage>
        <taxon>Bacteria</taxon>
        <taxon>Pseudomonadati</taxon>
        <taxon>Pseudomonadota</taxon>
        <taxon>Alphaproteobacteria</taxon>
        <taxon>Hyphomicrobiales</taxon>
        <taxon>Nitrobacteraceae</taxon>
        <taxon>Rhodopseudomonas</taxon>
    </lineage>
</organism>
<proteinExistence type="inferred from homology"/>
<dbReference type="EMBL" id="CP000463">
    <property type="protein sequence ID" value="ABJ07498.1"/>
    <property type="molecule type" value="Genomic_DNA"/>
</dbReference>
<dbReference type="SMR" id="Q07KN6"/>
<dbReference type="STRING" id="316055.RPE_3568"/>
<dbReference type="KEGG" id="rpe:RPE_3568"/>
<dbReference type="eggNOG" id="COG1841">
    <property type="taxonomic scope" value="Bacteria"/>
</dbReference>
<dbReference type="HOGENOM" id="CLU_131047_1_2_5"/>
<dbReference type="OrthoDB" id="9812790at2"/>
<dbReference type="GO" id="GO:0022625">
    <property type="term" value="C:cytosolic large ribosomal subunit"/>
    <property type="evidence" value="ECO:0007669"/>
    <property type="project" value="TreeGrafter"/>
</dbReference>
<dbReference type="GO" id="GO:0003735">
    <property type="term" value="F:structural constituent of ribosome"/>
    <property type="evidence" value="ECO:0007669"/>
    <property type="project" value="InterPro"/>
</dbReference>
<dbReference type="GO" id="GO:0006412">
    <property type="term" value="P:translation"/>
    <property type="evidence" value="ECO:0007669"/>
    <property type="project" value="UniProtKB-UniRule"/>
</dbReference>
<dbReference type="CDD" id="cd01658">
    <property type="entry name" value="Ribosomal_L30"/>
    <property type="match status" value="1"/>
</dbReference>
<dbReference type="Gene3D" id="3.30.1390.20">
    <property type="entry name" value="Ribosomal protein L30, ferredoxin-like fold domain"/>
    <property type="match status" value="1"/>
</dbReference>
<dbReference type="HAMAP" id="MF_01371_B">
    <property type="entry name" value="Ribosomal_uL30_B"/>
    <property type="match status" value="1"/>
</dbReference>
<dbReference type="InterPro" id="IPR036919">
    <property type="entry name" value="Ribo_uL30_ferredoxin-like_sf"/>
</dbReference>
<dbReference type="InterPro" id="IPR005996">
    <property type="entry name" value="Ribosomal_uL30_bac-type"/>
</dbReference>
<dbReference type="InterPro" id="IPR016082">
    <property type="entry name" value="Ribosomal_uL30_ferredoxin-like"/>
</dbReference>
<dbReference type="NCBIfam" id="TIGR01308">
    <property type="entry name" value="rpmD_bact"/>
    <property type="match status" value="1"/>
</dbReference>
<dbReference type="PANTHER" id="PTHR15892:SF2">
    <property type="entry name" value="LARGE RIBOSOMAL SUBUNIT PROTEIN UL30M"/>
    <property type="match status" value="1"/>
</dbReference>
<dbReference type="PANTHER" id="PTHR15892">
    <property type="entry name" value="MITOCHONDRIAL RIBOSOMAL PROTEIN L30"/>
    <property type="match status" value="1"/>
</dbReference>
<dbReference type="Pfam" id="PF00327">
    <property type="entry name" value="Ribosomal_L30"/>
    <property type="match status" value="1"/>
</dbReference>
<dbReference type="PIRSF" id="PIRSF002211">
    <property type="entry name" value="Ribosomal_L30_bac-type"/>
    <property type="match status" value="1"/>
</dbReference>
<dbReference type="SUPFAM" id="SSF55129">
    <property type="entry name" value="Ribosomal protein L30p/L7e"/>
    <property type="match status" value="1"/>
</dbReference>
<protein>
    <recommendedName>
        <fullName evidence="1">Large ribosomal subunit protein uL30</fullName>
    </recommendedName>
    <alternativeName>
        <fullName evidence="2">50S ribosomal protein L30</fullName>
    </alternativeName>
</protein>
<accession>Q07KN6</accession>
<comment type="subunit">
    <text evidence="1">Part of the 50S ribosomal subunit.</text>
</comment>
<comment type="similarity">
    <text evidence="1">Belongs to the universal ribosomal protein uL30 family.</text>
</comment>
<evidence type="ECO:0000255" key="1">
    <source>
        <dbReference type="HAMAP-Rule" id="MF_01371"/>
    </source>
</evidence>
<evidence type="ECO:0000305" key="2"/>
<reference key="1">
    <citation type="submission" date="2006-09" db="EMBL/GenBank/DDBJ databases">
        <title>Complete sequence of Rhodopseudomonas palustris BisA53.</title>
        <authorList>
            <consortium name="US DOE Joint Genome Institute"/>
            <person name="Copeland A."/>
            <person name="Lucas S."/>
            <person name="Lapidus A."/>
            <person name="Barry K."/>
            <person name="Detter J.C."/>
            <person name="Glavina del Rio T."/>
            <person name="Hammon N."/>
            <person name="Israni S."/>
            <person name="Dalin E."/>
            <person name="Tice H."/>
            <person name="Pitluck S."/>
            <person name="Chain P."/>
            <person name="Malfatti S."/>
            <person name="Shin M."/>
            <person name="Vergez L."/>
            <person name="Schmutz J."/>
            <person name="Larimer F."/>
            <person name="Land M."/>
            <person name="Hauser L."/>
            <person name="Pelletier D.A."/>
            <person name="Kyrpides N."/>
            <person name="Kim E."/>
            <person name="Harwood C.S."/>
            <person name="Oda Y."/>
            <person name="Richardson P."/>
        </authorList>
    </citation>
    <scope>NUCLEOTIDE SEQUENCE [LARGE SCALE GENOMIC DNA]</scope>
    <source>
        <strain>BisA53</strain>
    </source>
</reference>
<feature type="chain" id="PRO_0000273840" description="Large ribosomal subunit protein uL30">
    <location>
        <begin position="1"/>
        <end position="64"/>
    </location>
</feature>
<gene>
    <name evidence="1" type="primary">rpmD</name>
    <name type="ordered locus">RPE_3568</name>
</gene>